<comment type="subcellular location">
    <subcellularLocation>
        <location evidence="1">Cell membrane</location>
        <topology evidence="1">Lipid-anchor</topology>
    </subcellularLocation>
</comment>
<sequence>MLMRSVCFILLAVLLFSLSACEPSHQQQKQASAAKDEKKDIIPLSAEKADGAEGWLNNSTILYTASNPTKTELFAYRIFTGKAKKLYQTDGQIVDVQINAREQMILLQITHSQKTAVVLLNAEGETLYEKDYETYELEAAWNQYDPYQMMVTEFNENWDFHTYQVNAKKDESFLSPVQVPFIHWTSKNTFDYVKEGRDDKTGPLYTFDTASKTEQKLEDNVLFFDSFHQMSFTVKSASGGKGTYQFKTPQSTSPVTAKWPLQAKYTSLAPMEYDYDEAGGLFYTFKQSGDAYKLAAINVASGETKDLVSLREMEPIQISPNGKYALYGFHFEQIILLKSHETKQLIIDQKEME</sequence>
<organism>
    <name type="scientific">Bacillus subtilis (strain 168)</name>
    <dbReference type="NCBI Taxonomy" id="224308"/>
    <lineage>
        <taxon>Bacteria</taxon>
        <taxon>Bacillati</taxon>
        <taxon>Bacillota</taxon>
        <taxon>Bacilli</taxon>
        <taxon>Bacillales</taxon>
        <taxon>Bacillaceae</taxon>
        <taxon>Bacillus</taxon>
    </lineage>
</organism>
<evidence type="ECO:0000255" key="1">
    <source>
        <dbReference type="PROSITE-ProRule" id="PRU00303"/>
    </source>
</evidence>
<evidence type="ECO:0000305" key="2"/>
<name>YQGU_BACSU</name>
<accession>P54498</accession>
<reference key="1">
    <citation type="journal article" date="1996" name="Microbiology">
        <title>Systematic sequencing of the 283 kb 210 degrees-232 degrees region of the Bacillus subtilis genome containing the skin element and many sporulation genes.</title>
        <authorList>
            <person name="Mizuno M."/>
            <person name="Masuda S."/>
            <person name="Takemaru K."/>
            <person name="Hosono S."/>
            <person name="Sato T."/>
            <person name="Takeuchi M."/>
            <person name="Kobayashi Y."/>
        </authorList>
    </citation>
    <scope>NUCLEOTIDE SEQUENCE [GENOMIC DNA]</scope>
    <source>
        <strain>168 / JH642</strain>
    </source>
</reference>
<reference key="2">
    <citation type="journal article" date="1997" name="Nature">
        <title>The complete genome sequence of the Gram-positive bacterium Bacillus subtilis.</title>
        <authorList>
            <person name="Kunst F."/>
            <person name="Ogasawara N."/>
            <person name="Moszer I."/>
            <person name="Albertini A.M."/>
            <person name="Alloni G."/>
            <person name="Azevedo V."/>
            <person name="Bertero M.G."/>
            <person name="Bessieres P."/>
            <person name="Bolotin A."/>
            <person name="Borchert S."/>
            <person name="Borriss R."/>
            <person name="Boursier L."/>
            <person name="Brans A."/>
            <person name="Braun M."/>
            <person name="Brignell S.C."/>
            <person name="Bron S."/>
            <person name="Brouillet S."/>
            <person name="Bruschi C.V."/>
            <person name="Caldwell B."/>
            <person name="Capuano V."/>
            <person name="Carter N.M."/>
            <person name="Choi S.-K."/>
            <person name="Codani J.-J."/>
            <person name="Connerton I.F."/>
            <person name="Cummings N.J."/>
            <person name="Daniel R.A."/>
            <person name="Denizot F."/>
            <person name="Devine K.M."/>
            <person name="Duesterhoeft A."/>
            <person name="Ehrlich S.D."/>
            <person name="Emmerson P.T."/>
            <person name="Entian K.-D."/>
            <person name="Errington J."/>
            <person name="Fabret C."/>
            <person name="Ferrari E."/>
            <person name="Foulger D."/>
            <person name="Fritz C."/>
            <person name="Fujita M."/>
            <person name="Fujita Y."/>
            <person name="Fuma S."/>
            <person name="Galizzi A."/>
            <person name="Galleron N."/>
            <person name="Ghim S.-Y."/>
            <person name="Glaser P."/>
            <person name="Goffeau A."/>
            <person name="Golightly E.J."/>
            <person name="Grandi G."/>
            <person name="Guiseppi G."/>
            <person name="Guy B.J."/>
            <person name="Haga K."/>
            <person name="Haiech J."/>
            <person name="Harwood C.R."/>
            <person name="Henaut A."/>
            <person name="Hilbert H."/>
            <person name="Holsappel S."/>
            <person name="Hosono S."/>
            <person name="Hullo M.-F."/>
            <person name="Itaya M."/>
            <person name="Jones L.-M."/>
            <person name="Joris B."/>
            <person name="Karamata D."/>
            <person name="Kasahara Y."/>
            <person name="Klaerr-Blanchard M."/>
            <person name="Klein C."/>
            <person name="Kobayashi Y."/>
            <person name="Koetter P."/>
            <person name="Koningstein G."/>
            <person name="Krogh S."/>
            <person name="Kumano M."/>
            <person name="Kurita K."/>
            <person name="Lapidus A."/>
            <person name="Lardinois S."/>
            <person name="Lauber J."/>
            <person name="Lazarevic V."/>
            <person name="Lee S.-M."/>
            <person name="Levine A."/>
            <person name="Liu H."/>
            <person name="Masuda S."/>
            <person name="Mauel C."/>
            <person name="Medigue C."/>
            <person name="Medina N."/>
            <person name="Mellado R.P."/>
            <person name="Mizuno M."/>
            <person name="Moestl D."/>
            <person name="Nakai S."/>
            <person name="Noback M."/>
            <person name="Noone D."/>
            <person name="O'Reilly M."/>
            <person name="Ogawa K."/>
            <person name="Ogiwara A."/>
            <person name="Oudega B."/>
            <person name="Park S.-H."/>
            <person name="Parro V."/>
            <person name="Pohl T.M."/>
            <person name="Portetelle D."/>
            <person name="Porwollik S."/>
            <person name="Prescott A.M."/>
            <person name="Presecan E."/>
            <person name="Pujic P."/>
            <person name="Purnelle B."/>
            <person name="Rapoport G."/>
            <person name="Rey M."/>
            <person name="Reynolds S."/>
            <person name="Rieger M."/>
            <person name="Rivolta C."/>
            <person name="Rocha E."/>
            <person name="Roche B."/>
            <person name="Rose M."/>
            <person name="Sadaie Y."/>
            <person name="Sato T."/>
            <person name="Scanlan E."/>
            <person name="Schleich S."/>
            <person name="Schroeter R."/>
            <person name="Scoffone F."/>
            <person name="Sekiguchi J."/>
            <person name="Sekowska A."/>
            <person name="Seror S.J."/>
            <person name="Serror P."/>
            <person name="Shin B.-S."/>
            <person name="Soldo B."/>
            <person name="Sorokin A."/>
            <person name="Tacconi E."/>
            <person name="Takagi T."/>
            <person name="Takahashi H."/>
            <person name="Takemaru K."/>
            <person name="Takeuchi M."/>
            <person name="Tamakoshi A."/>
            <person name="Tanaka T."/>
            <person name="Terpstra P."/>
            <person name="Tognoni A."/>
            <person name="Tosato V."/>
            <person name="Uchiyama S."/>
            <person name="Vandenbol M."/>
            <person name="Vannier F."/>
            <person name="Vassarotti A."/>
            <person name="Viari A."/>
            <person name="Wambutt R."/>
            <person name="Wedler E."/>
            <person name="Wedler H."/>
            <person name="Weitzenegger T."/>
            <person name="Winters P."/>
            <person name="Wipat A."/>
            <person name="Yamamoto H."/>
            <person name="Yamane K."/>
            <person name="Yasumoto K."/>
            <person name="Yata K."/>
            <person name="Yoshida K."/>
            <person name="Yoshikawa H.-F."/>
            <person name="Zumstein E."/>
            <person name="Yoshikawa H."/>
            <person name="Danchin A."/>
        </authorList>
    </citation>
    <scope>NUCLEOTIDE SEQUENCE [LARGE SCALE GENOMIC DNA]</scope>
    <source>
        <strain>168</strain>
    </source>
</reference>
<reference key="3">
    <citation type="journal article" date="2009" name="Microbiology">
        <title>From a consortium sequence to a unified sequence: the Bacillus subtilis 168 reference genome a decade later.</title>
        <authorList>
            <person name="Barbe V."/>
            <person name="Cruveiller S."/>
            <person name="Kunst F."/>
            <person name="Lenoble P."/>
            <person name="Meurice G."/>
            <person name="Sekowska A."/>
            <person name="Vallenet D."/>
            <person name="Wang T."/>
            <person name="Moszer I."/>
            <person name="Medigue C."/>
            <person name="Danchin A."/>
        </authorList>
    </citation>
    <scope>SEQUENCE REVISION TO 22; 75 AND 280</scope>
</reference>
<gene>
    <name type="primary">yqgU</name>
    <name type="ordered locus">BSU24820</name>
</gene>
<protein>
    <recommendedName>
        <fullName>Uncharacterized lipoprotein YqgU</fullName>
    </recommendedName>
</protein>
<dbReference type="EMBL" id="D84432">
    <property type="protein sequence ID" value="BAA12524.1"/>
    <property type="molecule type" value="Genomic_DNA"/>
</dbReference>
<dbReference type="EMBL" id="AL009126">
    <property type="protein sequence ID" value="CAB14413.2"/>
    <property type="molecule type" value="Genomic_DNA"/>
</dbReference>
<dbReference type="PIR" id="F69957">
    <property type="entry name" value="F69957"/>
</dbReference>
<dbReference type="RefSeq" id="NP_390362.2">
    <property type="nucleotide sequence ID" value="NC_000964.3"/>
</dbReference>
<dbReference type="RefSeq" id="WP_003230137.1">
    <property type="nucleotide sequence ID" value="NZ_OZ025638.1"/>
</dbReference>
<dbReference type="SMR" id="P54498"/>
<dbReference type="FunCoup" id="P54498">
    <property type="interactions" value="12"/>
</dbReference>
<dbReference type="STRING" id="224308.BSU24820"/>
<dbReference type="PaxDb" id="224308-BSU24820"/>
<dbReference type="EnsemblBacteria" id="CAB14413">
    <property type="protein sequence ID" value="CAB14413"/>
    <property type="gene ID" value="BSU_24820"/>
</dbReference>
<dbReference type="GeneID" id="938213"/>
<dbReference type="KEGG" id="bsu:BSU24820"/>
<dbReference type="PATRIC" id="fig|224308.43.peg.2589"/>
<dbReference type="eggNOG" id="ENOG50324E2">
    <property type="taxonomic scope" value="Bacteria"/>
</dbReference>
<dbReference type="InParanoid" id="P54498"/>
<dbReference type="OrthoDB" id="2168335at2"/>
<dbReference type="BioCyc" id="BSUB:BSU24820-MONOMER"/>
<dbReference type="Proteomes" id="UP000001570">
    <property type="component" value="Chromosome"/>
</dbReference>
<dbReference type="GO" id="GO:0005886">
    <property type="term" value="C:plasma membrane"/>
    <property type="evidence" value="ECO:0007669"/>
    <property type="project" value="UniProtKB-SubCell"/>
</dbReference>
<dbReference type="InterPro" id="IPR048421">
    <property type="entry name" value="YqgU_beta-prop"/>
</dbReference>
<dbReference type="Pfam" id="PF21101">
    <property type="entry name" value="YqgU"/>
    <property type="match status" value="1"/>
</dbReference>
<dbReference type="SUPFAM" id="SSF82171">
    <property type="entry name" value="DPP6 N-terminal domain-like"/>
    <property type="match status" value="1"/>
</dbReference>
<dbReference type="PROSITE" id="PS51257">
    <property type="entry name" value="PROKAR_LIPOPROTEIN"/>
    <property type="match status" value="1"/>
</dbReference>
<feature type="signal peptide" evidence="1">
    <location>
        <begin position="1"/>
        <end position="20"/>
    </location>
</feature>
<feature type="chain" id="PRO_0000013729" description="Uncharacterized lipoprotein YqgU">
    <location>
        <begin position="21"/>
        <end position="353"/>
    </location>
</feature>
<feature type="lipid moiety-binding region" description="N-palmitoyl cysteine" evidence="1">
    <location>
        <position position="21"/>
    </location>
</feature>
<feature type="lipid moiety-binding region" description="S-diacylglycerol cysteine" evidence="1">
    <location>
        <position position="21"/>
    </location>
</feature>
<feature type="sequence conflict" description="In Ref. 1; BAA12524." evidence="2" ref="1">
    <original>E</original>
    <variation>K</variation>
    <location>
        <position position="22"/>
    </location>
</feature>
<feature type="sequence conflict" description="In Ref. 1; BAA12524." evidence="2" ref="1">
    <original>A</original>
    <variation>P</variation>
    <location>
        <position position="75"/>
    </location>
</feature>
<feature type="sequence conflict" description="In Ref. 1; BAA12524." evidence="2" ref="1">
    <original>G</original>
    <variation>S</variation>
    <location>
        <position position="280"/>
    </location>
</feature>
<keyword id="KW-1003">Cell membrane</keyword>
<keyword id="KW-0449">Lipoprotein</keyword>
<keyword id="KW-0472">Membrane</keyword>
<keyword id="KW-0564">Palmitate</keyword>
<keyword id="KW-1185">Reference proteome</keyword>
<keyword id="KW-0732">Signal</keyword>
<proteinExistence type="inferred from homology"/>